<keyword id="KW-0002">3D-structure</keyword>
<keyword id="KW-0130">Cell adhesion</keyword>
<keyword id="KW-1003">Cell membrane</keyword>
<keyword id="KW-0903">Direct protein sequencing</keyword>
<keyword id="KW-1015">Disulfide bond</keyword>
<keyword id="KW-0325">Glycoprotein</keyword>
<keyword id="KW-0336">GPI-anchor</keyword>
<keyword id="KW-0393">Immunoglobulin domain</keyword>
<keyword id="KW-0449">Lipoprotein</keyword>
<keyword id="KW-0472">Membrane</keyword>
<keyword id="KW-0914">Notch signaling pathway</keyword>
<keyword id="KW-1185">Reference proteome</keyword>
<keyword id="KW-0677">Repeat</keyword>
<keyword id="KW-0732">Signal</keyword>
<reference key="1">
    <citation type="journal article" date="1989" name="J. Cell Biol.">
        <title>The mouse neuronal cell surface protein F3: a phosphatidylinositol-anchored member of the immunoglobulin superfamily related to chicken contactin.</title>
        <authorList>
            <person name="Gennarini G."/>
            <person name="Cibelli G."/>
            <person name="Rougon G."/>
            <person name="Mattei M.-G."/>
            <person name="Goridis C."/>
        </authorList>
    </citation>
    <scope>NUCLEOTIDE SEQUENCE [MRNA]</scope>
    <source>
        <strain>C57BL/6J</strain>
        <tissue>Brain</tissue>
    </source>
</reference>
<reference key="2">
    <citation type="journal article" date="2004" name="Genome Res.">
        <title>The status, quality, and expansion of the NIH full-length cDNA project: the Mammalian Gene Collection (MGC).</title>
        <authorList>
            <consortium name="The MGC Project Team"/>
        </authorList>
    </citation>
    <scope>NUCLEOTIDE SEQUENCE [LARGE SCALE MRNA]</scope>
    <source>
        <strain>CD-1</strain>
        <tissue>Neural stem cell</tissue>
    </source>
</reference>
<reference key="3">
    <citation type="submission" date="2007-04" db="UniProtKB">
        <authorList>
            <person name="Lubec G."/>
            <person name="Kang S.U."/>
        </authorList>
    </citation>
    <scope>PROTEIN SEQUENCE OF 79-90; 226-249; 604-613; 619-628; 759-768 AND 859-869</scope>
    <scope>IDENTIFICATION BY MASS SPECTROMETRY</scope>
    <source>
        <strain>C57BL/6J</strain>
        <tissue>Brain</tissue>
    </source>
</reference>
<reference key="4">
    <citation type="journal article" date="2005" name="Science">
        <title>The transcriptional landscape of the mammalian genome.</title>
        <authorList>
            <person name="Carninci P."/>
            <person name="Kasukawa T."/>
            <person name="Katayama S."/>
            <person name="Gough J."/>
            <person name="Frith M.C."/>
            <person name="Maeda N."/>
            <person name="Oyama R."/>
            <person name="Ravasi T."/>
            <person name="Lenhard B."/>
            <person name="Wells C."/>
            <person name="Kodzius R."/>
            <person name="Shimokawa K."/>
            <person name="Bajic V.B."/>
            <person name="Brenner S.E."/>
            <person name="Batalov S."/>
            <person name="Forrest A.R."/>
            <person name="Zavolan M."/>
            <person name="Davis M.J."/>
            <person name="Wilming L.G."/>
            <person name="Aidinis V."/>
            <person name="Allen J.E."/>
            <person name="Ambesi-Impiombato A."/>
            <person name="Apweiler R."/>
            <person name="Aturaliya R.N."/>
            <person name="Bailey T.L."/>
            <person name="Bansal M."/>
            <person name="Baxter L."/>
            <person name="Beisel K.W."/>
            <person name="Bersano T."/>
            <person name="Bono H."/>
            <person name="Chalk A.M."/>
            <person name="Chiu K.P."/>
            <person name="Choudhary V."/>
            <person name="Christoffels A."/>
            <person name="Clutterbuck D.R."/>
            <person name="Crowe M.L."/>
            <person name="Dalla E."/>
            <person name="Dalrymple B.P."/>
            <person name="de Bono B."/>
            <person name="Della Gatta G."/>
            <person name="di Bernardo D."/>
            <person name="Down T."/>
            <person name="Engstrom P."/>
            <person name="Fagiolini M."/>
            <person name="Faulkner G."/>
            <person name="Fletcher C.F."/>
            <person name="Fukushima T."/>
            <person name="Furuno M."/>
            <person name="Futaki S."/>
            <person name="Gariboldi M."/>
            <person name="Georgii-Hemming P."/>
            <person name="Gingeras T.R."/>
            <person name="Gojobori T."/>
            <person name="Green R.E."/>
            <person name="Gustincich S."/>
            <person name="Harbers M."/>
            <person name="Hayashi Y."/>
            <person name="Hensch T.K."/>
            <person name="Hirokawa N."/>
            <person name="Hill D."/>
            <person name="Huminiecki L."/>
            <person name="Iacono M."/>
            <person name="Ikeo K."/>
            <person name="Iwama A."/>
            <person name="Ishikawa T."/>
            <person name="Jakt M."/>
            <person name="Kanapin A."/>
            <person name="Katoh M."/>
            <person name="Kawasawa Y."/>
            <person name="Kelso J."/>
            <person name="Kitamura H."/>
            <person name="Kitano H."/>
            <person name="Kollias G."/>
            <person name="Krishnan S.P."/>
            <person name="Kruger A."/>
            <person name="Kummerfeld S.K."/>
            <person name="Kurochkin I.V."/>
            <person name="Lareau L.F."/>
            <person name="Lazarevic D."/>
            <person name="Lipovich L."/>
            <person name="Liu J."/>
            <person name="Liuni S."/>
            <person name="McWilliam S."/>
            <person name="Madan Babu M."/>
            <person name="Madera M."/>
            <person name="Marchionni L."/>
            <person name="Matsuda H."/>
            <person name="Matsuzawa S."/>
            <person name="Miki H."/>
            <person name="Mignone F."/>
            <person name="Miyake S."/>
            <person name="Morris K."/>
            <person name="Mottagui-Tabar S."/>
            <person name="Mulder N."/>
            <person name="Nakano N."/>
            <person name="Nakauchi H."/>
            <person name="Ng P."/>
            <person name="Nilsson R."/>
            <person name="Nishiguchi S."/>
            <person name="Nishikawa S."/>
            <person name="Nori F."/>
            <person name="Ohara O."/>
            <person name="Okazaki Y."/>
            <person name="Orlando V."/>
            <person name="Pang K.C."/>
            <person name="Pavan W.J."/>
            <person name="Pavesi G."/>
            <person name="Pesole G."/>
            <person name="Petrovsky N."/>
            <person name="Piazza S."/>
            <person name="Reed J."/>
            <person name="Reid J.F."/>
            <person name="Ring B.Z."/>
            <person name="Ringwald M."/>
            <person name="Rost B."/>
            <person name="Ruan Y."/>
            <person name="Salzberg S.L."/>
            <person name="Sandelin A."/>
            <person name="Schneider C."/>
            <person name="Schoenbach C."/>
            <person name="Sekiguchi K."/>
            <person name="Semple C.A."/>
            <person name="Seno S."/>
            <person name="Sessa L."/>
            <person name="Sheng Y."/>
            <person name="Shibata Y."/>
            <person name="Shimada H."/>
            <person name="Shimada K."/>
            <person name="Silva D."/>
            <person name="Sinclair B."/>
            <person name="Sperling S."/>
            <person name="Stupka E."/>
            <person name="Sugiura K."/>
            <person name="Sultana R."/>
            <person name="Takenaka Y."/>
            <person name="Taki K."/>
            <person name="Tammoja K."/>
            <person name="Tan S.L."/>
            <person name="Tang S."/>
            <person name="Taylor M.S."/>
            <person name="Tegner J."/>
            <person name="Teichmann S.A."/>
            <person name="Ueda H.R."/>
            <person name="van Nimwegen E."/>
            <person name="Verardo R."/>
            <person name="Wei C.L."/>
            <person name="Yagi K."/>
            <person name="Yamanishi H."/>
            <person name="Zabarovsky E."/>
            <person name="Zhu S."/>
            <person name="Zimmer A."/>
            <person name="Hide W."/>
            <person name="Bult C."/>
            <person name="Grimmond S.M."/>
            <person name="Teasdale R.D."/>
            <person name="Liu E.T."/>
            <person name="Brusic V."/>
            <person name="Quackenbush J."/>
            <person name="Wahlestedt C."/>
            <person name="Mattick J.S."/>
            <person name="Hume D.A."/>
            <person name="Kai C."/>
            <person name="Sasaki D."/>
            <person name="Tomaru Y."/>
            <person name="Fukuda S."/>
            <person name="Kanamori-Katayama M."/>
            <person name="Suzuki M."/>
            <person name="Aoki J."/>
            <person name="Arakawa T."/>
            <person name="Iida J."/>
            <person name="Imamura K."/>
            <person name="Itoh M."/>
            <person name="Kato T."/>
            <person name="Kawaji H."/>
            <person name="Kawagashira N."/>
            <person name="Kawashima T."/>
            <person name="Kojima M."/>
            <person name="Kondo S."/>
            <person name="Konno H."/>
            <person name="Nakano K."/>
            <person name="Ninomiya N."/>
            <person name="Nishio T."/>
            <person name="Okada M."/>
            <person name="Plessy C."/>
            <person name="Shibata K."/>
            <person name="Shiraki T."/>
            <person name="Suzuki S."/>
            <person name="Tagami M."/>
            <person name="Waki K."/>
            <person name="Watahiki A."/>
            <person name="Okamura-Oho Y."/>
            <person name="Suzuki H."/>
            <person name="Kawai J."/>
            <person name="Hayashizaki Y."/>
        </authorList>
    </citation>
    <scope>NUCLEOTIDE SEQUENCE [LARGE SCALE MRNA] OF 574-1020</scope>
    <source>
        <strain>C57BL/6J</strain>
        <tissue>Corpora quadrigemina</tissue>
        <tissue>Skin</tissue>
    </source>
</reference>
<reference key="5">
    <citation type="journal article" date="1993" name="Neuron">
        <title>The F3/11 cell adhesion molecule mediates the repulsion of neurons by the extracellular matrix glycoprotein J1-160/180.</title>
        <authorList>
            <person name="Pesheva P."/>
            <person name="Gennarini G."/>
            <person name="Goridis C."/>
            <person name="Schachner M."/>
        </authorList>
    </citation>
    <scope>INTERACTION WITH TNR</scope>
    <scope>FUNCTION</scope>
</reference>
<reference key="6">
    <citation type="journal article" date="2001" name="J. Cell Biol.">
        <title>Overlapping functions of the cell adhesion molecules Nr-CAM and L1 in cerebellar granule cell development.</title>
        <authorList>
            <person name="Sakurai T."/>
            <person name="Lustig M."/>
            <person name="Babiarz J."/>
            <person name="Furley A.J."/>
            <person name="Tait S."/>
            <person name="Brophy P.J."/>
            <person name="Brown S.A."/>
            <person name="Brown L.Y."/>
            <person name="Mason C.A."/>
            <person name="Grumet M."/>
        </authorList>
    </citation>
    <scope>IDENTIFICATION IN A COMPLEX WITH NRCAM AND PTPRB</scope>
</reference>
<reference key="7">
    <citation type="journal article" date="2001" name="Neuron">
        <title>Contactin orchestrates assembly of the septate-like junctions at the paranode in myelinated peripheral nerve.</title>
        <authorList>
            <person name="Boyle M.E."/>
            <person name="Berglund E.O."/>
            <person name="Murai K.K."/>
            <person name="Weber L."/>
            <person name="Peles E."/>
            <person name="Ranscht B."/>
        </authorList>
    </citation>
    <scope>FUNCTION</scope>
</reference>
<reference key="8">
    <citation type="journal article" date="2003" name="Cell">
        <title>F3/contactin acts as a functional ligand for Notch during oligodendrocyte maturation.</title>
        <authorList>
            <person name="Hu Q.-D."/>
            <person name="Ang B.-T."/>
            <person name="Karsak M."/>
            <person name="Hu W.-P."/>
            <person name="Cui X.-Y."/>
            <person name="Duka T."/>
            <person name="Takeda Y."/>
            <person name="Chia W."/>
            <person name="Sankar N."/>
            <person name="Ng Y.-K."/>
            <person name="Ling E.-A."/>
            <person name="Maciag T."/>
            <person name="Small D."/>
            <person name="Trifonova R."/>
            <person name="Kopan R."/>
            <person name="Okano H."/>
            <person name="Nakafuku M."/>
            <person name="Chiba S."/>
            <person name="Hirai H."/>
            <person name="Aster J.C."/>
            <person name="Schachner M."/>
            <person name="Pallen C.J."/>
            <person name="Watanabe K."/>
            <person name="Xiao Z.-C."/>
        </authorList>
    </citation>
    <scope>FUNCTION</scope>
    <scope>INTERACTION WITH NOTCH1</scope>
</reference>
<reference key="9">
    <citation type="journal article" date="2010" name="Cell">
        <title>A tissue-specific atlas of mouse protein phosphorylation and expression.</title>
        <authorList>
            <person name="Huttlin E.L."/>
            <person name="Jedrychowski M.P."/>
            <person name="Elias J.E."/>
            <person name="Goswami T."/>
            <person name="Rad R."/>
            <person name="Beausoleil S.A."/>
            <person name="Villen J."/>
            <person name="Haas W."/>
            <person name="Sowa M.E."/>
            <person name="Gygi S.P."/>
        </authorList>
    </citation>
    <scope>IDENTIFICATION BY MASS SPECTROMETRY [LARGE SCALE ANALYSIS]</scope>
    <source>
        <tissue>Brain</tissue>
    </source>
</reference>
<reference key="10">
    <citation type="journal article" date="2010" name="Proc. Natl. Acad. Sci. U.S.A.">
        <title>The protein tyrosine phosphatases PTPRZ and PTPRG bind to distinct members of the contactin family of neural recognition molecules.</title>
        <authorList>
            <person name="Bouyain S."/>
            <person name="Watkins D.J."/>
        </authorList>
    </citation>
    <scope>INTERACTION WITH PTPRZ1</scope>
</reference>
<reference key="11">
    <citation type="journal article" date="2019" name="Exp. Cell Res.">
        <title>Fam208a orchestrates interaction protein network essential for early embryonic development and cell division.</title>
        <authorList>
            <person name="Gresakova V."/>
            <person name="Novosadova V."/>
            <person name="Prochazkova M."/>
            <person name="Bhargava S."/>
            <person name="Jenickova I."/>
            <person name="Prochazka J."/>
            <person name="Sedlacek R."/>
        </authorList>
    </citation>
    <scope>INTERACTION WITH TASOR</scope>
    <scope>TISSUE SPECIFICITY</scope>
</reference>
<protein>
    <recommendedName>
        <fullName>Contactin-1</fullName>
    </recommendedName>
    <alternativeName>
        <fullName>Neural cell surface protein F3</fullName>
    </alternativeName>
</protein>
<sequence length="1020" mass="113388">MKMPLLVSHLLLISLTSCLGDFTWHRRYGHGVSEEDKGFGPIFEEQPINTIYPEESLEGKVSLNCRARASPFPVYKWRMNNGDVDLTNDRYSMVGGNLVINNPDKQKDAGVYYCLASNNYGMVRSTEATLSFGYLDPFPPEERPEVKVKEGKGMVLLCDPPYHFPDDLSYRWLLNEFPVFITMDKRRFVSQTNGNLYIANVESSDRGNYSCFVSSPSITKSVFSKFIPLIPIPERTTKPYPADIVVQFKDIYTMMGQNVTLECFALGNPVPDIRWRKVLEPMPSTAEISTSGAVLKIFNIQLEDEGLYECEAENIRGKDKHQARIYVQAFPEWVEHINDTEVDIGSDLYWPCIATGKPIPTIRWLKNGYSYHKGELRLYDVTFENAGMYQCIAENAYGSIYANAELKILALAPTFEMNPMKKKILAAKGGRVIIECKPKAAPKPKFSWSKGTEWLVNSSRILIWEDGSLEINNITRNDGGIYTCFAENNRGKANSTGTLVITNPTRIILAPINADITVGENATMQCAASFDPALDLTFVWSFNGYVIDFNKEITHIHYQRNFMLDANGELLIRNAQLKHAGRYTCTAQTIVDNSSASADLVVRGPPGPPGGLRIEDIRATSVALTWSRGSDNHSPISKYTIQTKTILSDDWKDAKTDPPIIEGNMESAKAVDLIPWMEYEFRVVATNTLGTGEPSIPSNRIKTDGAAPNVAPSDVGGGGGTNRELTITWAPLSREYHYGNNFGYIVAFKPFDGEEWKKVTVTNPDTGRYVHKDETMTPSTAFQVKVKAFNNKGDGPYSLVAVINSAQDAPSEAPTEVGVKVLSSSEISVHWKHVLEKIVESYQIRYWAGHDKEAAAHRVQVTSQEYSARLENLLPDTQYFIEVGACNSAGCGPSSDVIETFTRKAPPSQPPRIISSVRSGSRYIITWDHVVALSNESTVTGYKILYRPDGQHDGKLFSTHKHSIEVPIPRDGEYVVEVRAHSDGGDGVVSQVKISGVSTLSSSLLSLLLPSLGFLVYSEF</sequence>
<feature type="signal peptide">
    <location>
        <begin position="1"/>
        <end position="20"/>
    </location>
</feature>
<feature type="chain" id="PRO_0000014687" description="Contactin-1">
    <location>
        <begin position="21"/>
        <end position="1001"/>
    </location>
</feature>
<feature type="propeptide" id="PRO_0000014688" description="Removed in mature form">
    <location>
        <begin position="1002"/>
        <end position="1020"/>
    </location>
</feature>
<feature type="domain" description="Ig-like C2-type 1">
    <location>
        <begin position="41"/>
        <end position="131"/>
    </location>
</feature>
<feature type="domain" description="Ig-like C2-type 2">
    <location>
        <begin position="137"/>
        <end position="223"/>
    </location>
</feature>
<feature type="domain" description="Ig-like C2-type 3">
    <location>
        <begin position="241"/>
        <end position="326"/>
    </location>
</feature>
<feature type="domain" description="Ig-like C2-type 4">
    <location>
        <begin position="331"/>
        <end position="407"/>
    </location>
</feature>
<feature type="domain" description="Ig-like C2-type 5">
    <location>
        <begin position="413"/>
        <end position="500"/>
    </location>
</feature>
<feature type="domain" description="Ig-like C2-type 6">
    <location>
        <begin position="504"/>
        <end position="603"/>
    </location>
</feature>
<feature type="domain" description="Fibronectin type-III 1" evidence="5">
    <location>
        <begin position="608"/>
        <end position="706"/>
    </location>
</feature>
<feature type="domain" description="Fibronectin type-III 2" evidence="5">
    <location>
        <begin position="711"/>
        <end position="808"/>
    </location>
</feature>
<feature type="domain" description="Fibronectin type-III 3" evidence="5">
    <location>
        <begin position="813"/>
        <end position="908"/>
    </location>
</feature>
<feature type="domain" description="Fibronectin type-III 4" evidence="5">
    <location>
        <begin position="909"/>
        <end position="1002"/>
    </location>
</feature>
<feature type="region of interest" description="Disordered" evidence="6">
    <location>
        <begin position="695"/>
        <end position="719"/>
    </location>
</feature>
<feature type="lipid moiety-binding region" description="GPI-anchor amidated serine" evidence="3">
    <location>
        <position position="1001"/>
    </location>
</feature>
<feature type="glycosylation site" description="N-linked (GlcNAc...) asparagine" evidence="3">
    <location>
        <position position="208"/>
    </location>
</feature>
<feature type="glycosylation site" description="N-linked (GlcNAc...) asparagine" evidence="3">
    <location>
        <position position="258"/>
    </location>
</feature>
<feature type="glycosylation site" description="N-linked (GlcNAc...) asparagine" evidence="3">
    <location>
        <position position="338"/>
    </location>
</feature>
<feature type="glycosylation site" description="N-linked (GlcNAc...) asparagine" evidence="3">
    <location>
        <position position="457"/>
    </location>
</feature>
<feature type="glycosylation site" description="N-linked (GlcNAc...) asparagine" evidence="3">
    <location>
        <position position="473"/>
    </location>
</feature>
<feature type="glycosylation site" description="N-linked (GlcNAc...) asparagine" evidence="3">
    <location>
        <position position="494"/>
    </location>
</feature>
<feature type="glycosylation site" description="N-linked (GlcNAc...) asparagine" evidence="3">
    <location>
        <position position="521"/>
    </location>
</feature>
<feature type="glycosylation site" description="N-linked (GlcNAc...) asparagine" evidence="3">
    <location>
        <position position="593"/>
    </location>
</feature>
<feature type="glycosylation site" description="N-linked (GlcNAc...) asparagine" evidence="3">
    <location>
        <position position="935"/>
    </location>
</feature>
<feature type="disulfide bond" evidence="4">
    <location>
        <begin position="65"/>
        <end position="114"/>
    </location>
</feature>
<feature type="disulfide bond" evidence="4">
    <location>
        <begin position="158"/>
        <end position="211"/>
    </location>
</feature>
<feature type="disulfide bond" evidence="4">
    <location>
        <begin position="263"/>
        <end position="310"/>
    </location>
</feature>
<feature type="disulfide bond" evidence="4">
    <location>
        <begin position="352"/>
        <end position="391"/>
    </location>
</feature>
<feature type="disulfide bond" evidence="4">
    <location>
        <begin position="436"/>
        <end position="484"/>
    </location>
</feature>
<feature type="disulfide bond" evidence="4">
    <location>
        <begin position="526"/>
        <end position="585"/>
    </location>
</feature>
<feature type="sequence conflict" description="In Ref. 2; AAH66864." evidence="12" ref="2">
    <original>I</original>
    <variation>V</variation>
    <location>
        <position position="433"/>
    </location>
</feature>
<proteinExistence type="evidence at protein level"/>
<comment type="function">
    <text evidence="7 8 11">Contactins mediate cell surface interactions during nervous system development. Involved in the formation of paranodal axo-glial junctions in myelinated peripheral nerves and in the signaling between axons and myelinating glial cells via its association with CNTNAP1. Participates in oligodendrocytes generation by acting as a ligand of NOTCH1. Its association with NOTCH1 promotes NOTCH1 activation through the released notch intracellular domain (NICD) and subsequent translocation to the nucleus. Interaction with TNR induces a repulsion of neurons and an inhibition of neurite outgrowth.</text>
</comment>
<comment type="subunit">
    <text evidence="1 2 8 9 10 11">Monomer. Interacts with CNTNAP1 in cis form (By similarity). Binds to the carbonic-anhydrase like domain of PTPRZ1 (PubMed:20133774). Interacts with NOTCH1 and TNR (PubMed:14567914, PubMed:7678967). Detected in a complex with NRCAM and PTPRB (PubMed:11564762). Interacts with TASOR (PubMed:31112734).</text>
</comment>
<comment type="subcellular location">
    <subcellularLocation>
        <location>Cell membrane</location>
        <topology>Lipid-anchor</topology>
        <topology>GPI-anchor</topology>
    </subcellularLocation>
</comment>
<comment type="tissue specificity">
    <text evidence="10">Expressed in the ovary and in Sertoli cells of the testis.</text>
</comment>
<comment type="miscellaneous">
    <text>F3 shares with L1, N-CAM, MAG, and other cell adhesion molecules from nervous tissue the L2/HNK-1 carbohydrate epitope.</text>
</comment>
<comment type="similarity">
    <text evidence="12">Belongs to the immunoglobulin superfamily. Contactin family.</text>
</comment>
<accession>P12960</accession>
<accession>Q6NXV7</accession>
<accession>Q8BR42</accession>
<accession>Q8C6A0</accession>
<evidence type="ECO:0000250" key="1">
    <source>
        <dbReference type="UniProtKB" id="Q12860"/>
    </source>
</evidence>
<evidence type="ECO:0000250" key="2">
    <source>
        <dbReference type="UniProtKB" id="Q63198"/>
    </source>
</evidence>
<evidence type="ECO:0000255" key="3"/>
<evidence type="ECO:0000255" key="4">
    <source>
        <dbReference type="PROSITE-ProRule" id="PRU00114"/>
    </source>
</evidence>
<evidence type="ECO:0000255" key="5">
    <source>
        <dbReference type="PROSITE-ProRule" id="PRU00316"/>
    </source>
</evidence>
<evidence type="ECO:0000256" key="6">
    <source>
        <dbReference type="SAM" id="MobiDB-lite"/>
    </source>
</evidence>
<evidence type="ECO:0000269" key="7">
    <source>
    </source>
</evidence>
<evidence type="ECO:0000269" key="8">
    <source>
    </source>
</evidence>
<evidence type="ECO:0000269" key="9">
    <source>
    </source>
</evidence>
<evidence type="ECO:0000269" key="10">
    <source>
    </source>
</evidence>
<evidence type="ECO:0000269" key="11">
    <source>
    </source>
</evidence>
<evidence type="ECO:0000305" key="12"/>
<name>CNTN1_MOUSE</name>
<gene>
    <name type="primary">Cntn1</name>
</gene>
<dbReference type="EMBL" id="X14943">
    <property type="protein sequence ID" value="CAA33075.1"/>
    <property type="molecule type" value="mRNA"/>
</dbReference>
<dbReference type="EMBL" id="BC066864">
    <property type="protein sequence ID" value="AAH66864.1"/>
    <property type="molecule type" value="mRNA"/>
</dbReference>
<dbReference type="EMBL" id="AK045710">
    <property type="protein sequence ID" value="BAC32466.1"/>
    <property type="molecule type" value="mRNA"/>
</dbReference>
<dbReference type="EMBL" id="AK076273">
    <property type="protein sequence ID" value="BAC36282.1"/>
    <property type="molecule type" value="mRNA"/>
</dbReference>
<dbReference type="CCDS" id="CCDS27763.1"/>
<dbReference type="PIR" id="S05944">
    <property type="entry name" value="S05944"/>
</dbReference>
<dbReference type="RefSeq" id="NP_001153119.1">
    <property type="nucleotide sequence ID" value="NM_001159647.2"/>
</dbReference>
<dbReference type="RefSeq" id="NP_001153120.1">
    <property type="nucleotide sequence ID" value="NM_001159648.2"/>
</dbReference>
<dbReference type="RefSeq" id="NP_001344980.1">
    <property type="nucleotide sequence ID" value="NM_001358051.2"/>
</dbReference>
<dbReference type="RefSeq" id="NP_001398100.1">
    <property type="nucleotide sequence ID" value="NM_001411171.1"/>
</dbReference>
<dbReference type="RefSeq" id="NP_031753.1">
    <property type="nucleotide sequence ID" value="NM_007727.3"/>
</dbReference>
<dbReference type="RefSeq" id="XP_017171911.1">
    <property type="nucleotide sequence ID" value="XM_017316422.1"/>
</dbReference>
<dbReference type="RefSeq" id="XP_036015004.1">
    <property type="nucleotide sequence ID" value="XM_036159111.1"/>
</dbReference>
<dbReference type="PDB" id="7OL2">
    <property type="method" value="X-ray"/>
    <property type="resolution" value="3.89 A"/>
    <property type="chains" value="A/B=21-604"/>
</dbReference>
<dbReference type="PDB" id="7OL4">
    <property type="method" value="X-ray"/>
    <property type="resolution" value="4.80 A"/>
    <property type="chains" value="A/B=21-604"/>
</dbReference>
<dbReference type="PDBsum" id="7OL2"/>
<dbReference type="PDBsum" id="7OL4"/>
<dbReference type="SASBDB" id="P12960"/>
<dbReference type="SMR" id="P12960"/>
<dbReference type="BioGRID" id="198797">
    <property type="interactions" value="26"/>
</dbReference>
<dbReference type="CORUM" id="P12960"/>
<dbReference type="FunCoup" id="P12960">
    <property type="interactions" value="720"/>
</dbReference>
<dbReference type="IntAct" id="P12960">
    <property type="interactions" value="10"/>
</dbReference>
<dbReference type="MINT" id="P12960"/>
<dbReference type="STRING" id="10090.ENSMUSP00000133063"/>
<dbReference type="GlyConnect" id="2224">
    <property type="glycosylation" value="19 N-Linked glycans (8 sites)"/>
</dbReference>
<dbReference type="GlyCosmos" id="P12960">
    <property type="glycosylation" value="9 sites, 19 glycans"/>
</dbReference>
<dbReference type="GlyGen" id="P12960">
    <property type="glycosylation" value="11 sites, 24 N-linked glycans (9 sites), 1 O-linked glycan (2 sites)"/>
</dbReference>
<dbReference type="iPTMnet" id="P12960"/>
<dbReference type="MetOSite" id="P12960"/>
<dbReference type="PhosphoSitePlus" id="P12960"/>
<dbReference type="SwissPalm" id="P12960"/>
<dbReference type="CPTAC" id="non-CPTAC-3642"/>
<dbReference type="PaxDb" id="10090-ENSMUSP00000000109"/>
<dbReference type="PeptideAtlas" id="P12960"/>
<dbReference type="ProteomicsDB" id="285524"/>
<dbReference type="ABCD" id="P12960">
    <property type="antibodies" value="1 sequenced antibody"/>
</dbReference>
<dbReference type="Antibodypedia" id="25021">
    <property type="antibodies" value="337 antibodies from 39 providers"/>
</dbReference>
<dbReference type="DNASU" id="12805"/>
<dbReference type="Ensembl" id="ENSMUST00000000109.11">
    <property type="protein sequence ID" value="ENSMUSP00000000109.5"/>
    <property type="gene ID" value="ENSMUSG00000055022.15"/>
</dbReference>
<dbReference type="Ensembl" id="ENSMUST00000068378.6">
    <property type="protein sequence ID" value="ENSMUSP00000067842.6"/>
    <property type="gene ID" value="ENSMUSG00000055022.15"/>
</dbReference>
<dbReference type="Ensembl" id="ENSMUST00000169825.8">
    <property type="protein sequence ID" value="ENSMUSP00000133063.2"/>
    <property type="gene ID" value="ENSMUSG00000055022.15"/>
</dbReference>
<dbReference type="GeneID" id="12805"/>
<dbReference type="KEGG" id="mmu:12805"/>
<dbReference type="UCSC" id="uc007xik.2">
    <property type="organism name" value="mouse"/>
</dbReference>
<dbReference type="AGR" id="MGI:105980"/>
<dbReference type="CTD" id="1272"/>
<dbReference type="MGI" id="MGI:105980">
    <property type="gene designation" value="Cntn1"/>
</dbReference>
<dbReference type="VEuPathDB" id="HostDB:ENSMUSG00000055022"/>
<dbReference type="eggNOG" id="KOG3513">
    <property type="taxonomic scope" value="Eukaryota"/>
</dbReference>
<dbReference type="GeneTree" id="ENSGT00940000155915"/>
<dbReference type="HOGENOM" id="CLU_005756_0_0_1"/>
<dbReference type="InParanoid" id="P12960"/>
<dbReference type="OMA" id="KICKAYT"/>
<dbReference type="OrthoDB" id="6138780at2759"/>
<dbReference type="PhylomeDB" id="P12960"/>
<dbReference type="TreeFam" id="TF351103"/>
<dbReference type="BioGRID-ORCS" id="12805">
    <property type="hits" value="1 hit in 76 CRISPR screens"/>
</dbReference>
<dbReference type="CD-CODE" id="CE726F99">
    <property type="entry name" value="Postsynaptic density"/>
</dbReference>
<dbReference type="ChiTaRS" id="Cntn1">
    <property type="organism name" value="mouse"/>
</dbReference>
<dbReference type="PRO" id="PR:P12960"/>
<dbReference type="Proteomes" id="UP000000589">
    <property type="component" value="Chromosome 15"/>
</dbReference>
<dbReference type="RNAct" id="P12960">
    <property type="molecule type" value="protein"/>
</dbReference>
<dbReference type="Bgee" id="ENSMUSG00000055022">
    <property type="expression patterns" value="Expressed in lateral geniculate body and 209 other cell types or tissues"/>
</dbReference>
<dbReference type="GO" id="GO:0098978">
    <property type="term" value="C:glutamatergic synapse"/>
    <property type="evidence" value="ECO:0000314"/>
    <property type="project" value="SynGO"/>
</dbReference>
<dbReference type="GO" id="GO:0043209">
    <property type="term" value="C:myelin sheath"/>
    <property type="evidence" value="ECO:0007005"/>
    <property type="project" value="UniProtKB"/>
</dbReference>
<dbReference type="GO" id="GO:0005886">
    <property type="term" value="C:plasma membrane"/>
    <property type="evidence" value="ECO:0000304"/>
    <property type="project" value="Reactome"/>
</dbReference>
<dbReference type="GO" id="GO:0045211">
    <property type="term" value="C:postsynaptic membrane"/>
    <property type="evidence" value="ECO:0000314"/>
    <property type="project" value="SynGO"/>
</dbReference>
<dbReference type="GO" id="GO:0042734">
    <property type="term" value="C:presynaptic membrane"/>
    <property type="evidence" value="ECO:0000314"/>
    <property type="project" value="SynGO"/>
</dbReference>
<dbReference type="GO" id="GO:0098552">
    <property type="term" value="C:side of membrane"/>
    <property type="evidence" value="ECO:0007669"/>
    <property type="project" value="UniProtKB-KW"/>
</dbReference>
<dbReference type="GO" id="GO:0045202">
    <property type="term" value="C:synapse"/>
    <property type="evidence" value="ECO:0000314"/>
    <property type="project" value="SynGO"/>
</dbReference>
<dbReference type="GO" id="GO:0030246">
    <property type="term" value="F:carbohydrate binding"/>
    <property type="evidence" value="ECO:0000314"/>
    <property type="project" value="MGI"/>
</dbReference>
<dbReference type="GO" id="GO:0007155">
    <property type="term" value="P:cell adhesion"/>
    <property type="evidence" value="ECO:0007669"/>
    <property type="project" value="UniProtKB-KW"/>
</dbReference>
<dbReference type="GO" id="GO:0032289">
    <property type="term" value="P:central nervous system myelin formation"/>
    <property type="evidence" value="ECO:0000316"/>
    <property type="project" value="MGI"/>
</dbReference>
<dbReference type="GO" id="GO:0021549">
    <property type="term" value="P:cerebellum development"/>
    <property type="evidence" value="ECO:0000315"/>
    <property type="project" value="MGI"/>
</dbReference>
<dbReference type="GO" id="GO:0010467">
    <property type="term" value="P:gene expression"/>
    <property type="evidence" value="ECO:0000315"/>
    <property type="project" value="MGI"/>
</dbReference>
<dbReference type="GO" id="GO:0007626">
    <property type="term" value="P:locomotory behavior"/>
    <property type="evidence" value="ECO:0000315"/>
    <property type="project" value="MGI"/>
</dbReference>
<dbReference type="GO" id="GO:0042552">
    <property type="term" value="P:myelination"/>
    <property type="evidence" value="ECO:0000315"/>
    <property type="project" value="MGI"/>
</dbReference>
<dbReference type="GO" id="GO:0031175">
    <property type="term" value="P:neuron projection development"/>
    <property type="evidence" value="ECO:0000316"/>
    <property type="project" value="MGI"/>
</dbReference>
<dbReference type="GO" id="GO:0007219">
    <property type="term" value="P:Notch signaling pathway"/>
    <property type="evidence" value="ECO:0007669"/>
    <property type="project" value="UniProtKB-KW"/>
</dbReference>
<dbReference type="GO" id="GO:0010628">
    <property type="term" value="P:positive regulation of gene expression"/>
    <property type="evidence" value="ECO:0000315"/>
    <property type="project" value="MGI"/>
</dbReference>
<dbReference type="GO" id="GO:0010976">
    <property type="term" value="P:positive regulation of neuron projection development"/>
    <property type="evidence" value="ECO:0000316"/>
    <property type="project" value="MGI"/>
</dbReference>
<dbReference type="GO" id="GO:0010765">
    <property type="term" value="P:positive regulation of sodium ion transport"/>
    <property type="evidence" value="ECO:0000315"/>
    <property type="project" value="MGI"/>
</dbReference>
<dbReference type="CDD" id="cd00063">
    <property type="entry name" value="FN3"/>
    <property type="match status" value="4"/>
</dbReference>
<dbReference type="CDD" id="cd05727">
    <property type="entry name" value="Ig2_Contactin-2-like"/>
    <property type="match status" value="1"/>
</dbReference>
<dbReference type="CDD" id="cd05852">
    <property type="entry name" value="Ig5_Contactin-1"/>
    <property type="match status" value="1"/>
</dbReference>
<dbReference type="CDD" id="cd04970">
    <property type="entry name" value="Ig6_Contactin"/>
    <property type="match status" value="1"/>
</dbReference>
<dbReference type="CDD" id="cd05849">
    <property type="entry name" value="IgI_1_Contactin-1"/>
    <property type="match status" value="1"/>
</dbReference>
<dbReference type="CDD" id="cd05851">
    <property type="entry name" value="IgI_3_Contactin-1"/>
    <property type="match status" value="1"/>
</dbReference>
<dbReference type="FunFam" id="2.60.40.10:FF:000035">
    <property type="entry name" value="Contactin 1"/>
    <property type="match status" value="1"/>
</dbReference>
<dbReference type="FunFam" id="2.60.40.10:FF:000044">
    <property type="entry name" value="Contactin 1"/>
    <property type="match status" value="1"/>
</dbReference>
<dbReference type="FunFam" id="2.60.40.10:FF:000047">
    <property type="entry name" value="Contactin 1"/>
    <property type="match status" value="1"/>
</dbReference>
<dbReference type="FunFam" id="2.60.40.10:FF:000052">
    <property type="entry name" value="Contactin 1"/>
    <property type="match status" value="1"/>
</dbReference>
<dbReference type="FunFam" id="2.60.40.10:FF:000054">
    <property type="entry name" value="Contactin 1"/>
    <property type="match status" value="1"/>
</dbReference>
<dbReference type="FunFam" id="2.60.40.10:FF:000064">
    <property type="entry name" value="Contactin 1"/>
    <property type="match status" value="1"/>
</dbReference>
<dbReference type="FunFam" id="2.60.40.10:FF:000526">
    <property type="entry name" value="Contactin 1"/>
    <property type="match status" value="1"/>
</dbReference>
<dbReference type="FunFam" id="2.60.40.10:FF:000004">
    <property type="entry name" value="DCC isoform 1"/>
    <property type="match status" value="2"/>
</dbReference>
<dbReference type="FunFam" id="2.60.40.10:FF:000005">
    <property type="entry name" value="Neuronal cell adhesion molecule"/>
    <property type="match status" value="1"/>
</dbReference>
<dbReference type="Gene3D" id="2.60.40.10">
    <property type="entry name" value="Immunoglobulins"/>
    <property type="match status" value="10"/>
</dbReference>
<dbReference type="InterPro" id="IPR047102">
    <property type="entry name" value="Contactin-1_2_Ig1"/>
</dbReference>
<dbReference type="InterPro" id="IPR036992">
    <property type="entry name" value="Contactin-1_Ig1"/>
</dbReference>
<dbReference type="InterPro" id="IPR047100">
    <property type="entry name" value="Contactin-1_Ig3"/>
</dbReference>
<dbReference type="InterPro" id="IPR047101">
    <property type="entry name" value="Contactin-1_Ig6"/>
</dbReference>
<dbReference type="InterPro" id="IPR003961">
    <property type="entry name" value="FN3_dom"/>
</dbReference>
<dbReference type="InterPro" id="IPR036116">
    <property type="entry name" value="FN3_sf"/>
</dbReference>
<dbReference type="InterPro" id="IPR007110">
    <property type="entry name" value="Ig-like_dom"/>
</dbReference>
<dbReference type="InterPro" id="IPR036179">
    <property type="entry name" value="Ig-like_dom_sf"/>
</dbReference>
<dbReference type="InterPro" id="IPR013783">
    <property type="entry name" value="Ig-like_fold"/>
</dbReference>
<dbReference type="InterPro" id="IPR013098">
    <property type="entry name" value="Ig_I-set"/>
</dbReference>
<dbReference type="InterPro" id="IPR003599">
    <property type="entry name" value="Ig_sub"/>
</dbReference>
<dbReference type="InterPro" id="IPR003598">
    <property type="entry name" value="Ig_sub2"/>
</dbReference>
<dbReference type="InterPro" id="IPR013151">
    <property type="entry name" value="Immunoglobulin_dom"/>
</dbReference>
<dbReference type="PANTHER" id="PTHR44170:SF10">
    <property type="entry name" value="CONTACTIN-1"/>
    <property type="match status" value="1"/>
</dbReference>
<dbReference type="PANTHER" id="PTHR44170">
    <property type="entry name" value="PROTEIN SIDEKICK"/>
    <property type="match status" value="1"/>
</dbReference>
<dbReference type="Pfam" id="PF00041">
    <property type="entry name" value="fn3"/>
    <property type="match status" value="2"/>
</dbReference>
<dbReference type="Pfam" id="PF07679">
    <property type="entry name" value="I-set"/>
    <property type="match status" value="2"/>
</dbReference>
<dbReference type="Pfam" id="PF00047">
    <property type="entry name" value="ig"/>
    <property type="match status" value="1"/>
</dbReference>
<dbReference type="Pfam" id="PF13927">
    <property type="entry name" value="Ig_3"/>
    <property type="match status" value="2"/>
</dbReference>
<dbReference type="SMART" id="SM00060">
    <property type="entry name" value="FN3"/>
    <property type="match status" value="4"/>
</dbReference>
<dbReference type="SMART" id="SM00409">
    <property type="entry name" value="IG"/>
    <property type="match status" value="6"/>
</dbReference>
<dbReference type="SMART" id="SM00408">
    <property type="entry name" value="IGc2"/>
    <property type="match status" value="5"/>
</dbReference>
<dbReference type="SUPFAM" id="SSF49265">
    <property type="entry name" value="Fibronectin type III"/>
    <property type="match status" value="2"/>
</dbReference>
<dbReference type="SUPFAM" id="SSF48726">
    <property type="entry name" value="Immunoglobulin"/>
    <property type="match status" value="6"/>
</dbReference>
<dbReference type="PROSITE" id="PS50853">
    <property type="entry name" value="FN3"/>
    <property type="match status" value="4"/>
</dbReference>
<dbReference type="PROSITE" id="PS50835">
    <property type="entry name" value="IG_LIKE"/>
    <property type="match status" value="6"/>
</dbReference>
<organism>
    <name type="scientific">Mus musculus</name>
    <name type="common">Mouse</name>
    <dbReference type="NCBI Taxonomy" id="10090"/>
    <lineage>
        <taxon>Eukaryota</taxon>
        <taxon>Metazoa</taxon>
        <taxon>Chordata</taxon>
        <taxon>Craniata</taxon>
        <taxon>Vertebrata</taxon>
        <taxon>Euteleostomi</taxon>
        <taxon>Mammalia</taxon>
        <taxon>Eutheria</taxon>
        <taxon>Euarchontoglires</taxon>
        <taxon>Glires</taxon>
        <taxon>Rodentia</taxon>
        <taxon>Myomorpha</taxon>
        <taxon>Muroidea</taxon>
        <taxon>Muridae</taxon>
        <taxon>Murinae</taxon>
        <taxon>Mus</taxon>
        <taxon>Mus</taxon>
    </lineage>
</organism>